<evidence type="ECO:0000250" key="1"/>
<evidence type="ECO:0000305" key="2"/>
<name>RR17_GRATL</name>
<protein>
    <recommendedName>
        <fullName evidence="2">Small ribosomal subunit protein uS17c</fullName>
    </recommendedName>
    <alternativeName>
        <fullName>30S ribosomal protein S17, chloroplastic</fullName>
    </alternativeName>
</protein>
<accession>Q6B8W2</accession>
<comment type="function">
    <text evidence="1">One of the primary rRNA binding proteins, it binds specifically to the 5'-end of 16S ribosomal RNA.</text>
</comment>
<comment type="subunit">
    <text evidence="1">Part of the 30S ribosomal subunit.</text>
</comment>
<comment type="subcellular location">
    <subcellularLocation>
        <location>Plastid</location>
        <location>Chloroplast</location>
    </subcellularLocation>
</comment>
<comment type="similarity">
    <text evidence="2">Belongs to the universal ribosomal protein uS17 family.</text>
</comment>
<keyword id="KW-0150">Chloroplast</keyword>
<keyword id="KW-0934">Plastid</keyword>
<keyword id="KW-0687">Ribonucleoprotein</keyword>
<keyword id="KW-0689">Ribosomal protein</keyword>
<keyword id="KW-0694">RNA-binding</keyword>
<keyword id="KW-0699">rRNA-binding</keyword>
<dbReference type="EMBL" id="AY673996">
    <property type="protein sequence ID" value="AAT79673.1"/>
    <property type="molecule type" value="Genomic_DNA"/>
</dbReference>
<dbReference type="RefSeq" id="YP_063598.1">
    <property type="nucleotide sequence ID" value="NC_006137.1"/>
</dbReference>
<dbReference type="SMR" id="Q6B8W2"/>
<dbReference type="GeneID" id="2944063"/>
<dbReference type="GO" id="GO:0009507">
    <property type="term" value="C:chloroplast"/>
    <property type="evidence" value="ECO:0007669"/>
    <property type="project" value="UniProtKB-SubCell"/>
</dbReference>
<dbReference type="GO" id="GO:0022627">
    <property type="term" value="C:cytosolic small ribosomal subunit"/>
    <property type="evidence" value="ECO:0007669"/>
    <property type="project" value="TreeGrafter"/>
</dbReference>
<dbReference type="GO" id="GO:0019843">
    <property type="term" value="F:rRNA binding"/>
    <property type="evidence" value="ECO:0007669"/>
    <property type="project" value="UniProtKB-UniRule"/>
</dbReference>
<dbReference type="GO" id="GO:0003735">
    <property type="term" value="F:structural constituent of ribosome"/>
    <property type="evidence" value="ECO:0007669"/>
    <property type="project" value="InterPro"/>
</dbReference>
<dbReference type="GO" id="GO:0006412">
    <property type="term" value="P:translation"/>
    <property type="evidence" value="ECO:0007669"/>
    <property type="project" value="UniProtKB-UniRule"/>
</dbReference>
<dbReference type="CDD" id="cd00364">
    <property type="entry name" value="Ribosomal_uS17"/>
    <property type="match status" value="1"/>
</dbReference>
<dbReference type="Gene3D" id="2.40.50.140">
    <property type="entry name" value="Nucleic acid-binding proteins"/>
    <property type="match status" value="1"/>
</dbReference>
<dbReference type="HAMAP" id="MF_01345_B">
    <property type="entry name" value="Ribosomal_uS17_B"/>
    <property type="match status" value="1"/>
</dbReference>
<dbReference type="InterPro" id="IPR012340">
    <property type="entry name" value="NA-bd_OB-fold"/>
</dbReference>
<dbReference type="InterPro" id="IPR000266">
    <property type="entry name" value="Ribosomal_uS17"/>
</dbReference>
<dbReference type="InterPro" id="IPR019984">
    <property type="entry name" value="Ribosomal_uS17_bact/chlr"/>
</dbReference>
<dbReference type="NCBIfam" id="NF004123">
    <property type="entry name" value="PRK05610.1"/>
    <property type="match status" value="1"/>
</dbReference>
<dbReference type="NCBIfam" id="TIGR03635">
    <property type="entry name" value="uS17_bact"/>
    <property type="match status" value="1"/>
</dbReference>
<dbReference type="PANTHER" id="PTHR10744">
    <property type="entry name" value="40S RIBOSOMAL PROTEIN S11 FAMILY MEMBER"/>
    <property type="match status" value="1"/>
</dbReference>
<dbReference type="PANTHER" id="PTHR10744:SF1">
    <property type="entry name" value="SMALL RIBOSOMAL SUBUNIT PROTEIN US17M"/>
    <property type="match status" value="1"/>
</dbReference>
<dbReference type="Pfam" id="PF00366">
    <property type="entry name" value="Ribosomal_S17"/>
    <property type="match status" value="1"/>
</dbReference>
<dbReference type="PRINTS" id="PR00973">
    <property type="entry name" value="RIBOSOMALS17"/>
</dbReference>
<dbReference type="SUPFAM" id="SSF50249">
    <property type="entry name" value="Nucleic acid-binding proteins"/>
    <property type="match status" value="1"/>
</dbReference>
<geneLocation type="chloroplast"/>
<sequence>MYKKYTIGTVISNKMNKTITVAVKNKAQHLRYKKIITKTNKYYAHDEHNQCYIGDIVKIRPYRPLSKKKRWILIERIIEK</sequence>
<gene>
    <name type="primary">rps17</name>
    <name type="ordered locus">Grc000092</name>
</gene>
<proteinExistence type="inferred from homology"/>
<organism>
    <name type="scientific">Gracilaria tenuistipitata var. liui</name>
    <name type="common">Red alga</name>
    <dbReference type="NCBI Taxonomy" id="285951"/>
    <lineage>
        <taxon>Eukaryota</taxon>
        <taxon>Rhodophyta</taxon>
        <taxon>Florideophyceae</taxon>
        <taxon>Rhodymeniophycidae</taxon>
        <taxon>Gracilariales</taxon>
        <taxon>Gracilariaceae</taxon>
        <taxon>Gracilaria</taxon>
        <taxon>Gracilaria tenuistipitata</taxon>
    </lineage>
</organism>
<reference key="1">
    <citation type="journal article" date="2004" name="J. Mol. Evol.">
        <title>Comparative analysis of the complete plastid genome sequence of the red alga Gracilaria tenuistipitata var. liui provides insights into the evolution of rhodoplasts and their relationship to other plastids.</title>
        <authorList>
            <person name="Hagopian J.C."/>
            <person name="Reis M."/>
            <person name="Kitajima J.P."/>
            <person name="Bhattacharya D."/>
            <person name="de Oliveira M.C."/>
        </authorList>
    </citation>
    <scope>NUCLEOTIDE SEQUENCE [LARGE SCALE GENOMIC DNA]</scope>
</reference>
<feature type="chain" id="PRO_0000232624" description="Small ribosomal subunit protein uS17c">
    <location>
        <begin position="1"/>
        <end position="80"/>
    </location>
</feature>